<protein>
    <recommendedName>
        <fullName evidence="1">Glycine cleavage system H protein</fullName>
    </recommendedName>
</protein>
<evidence type="ECO:0000255" key="1">
    <source>
        <dbReference type="HAMAP-Rule" id="MF_00272"/>
    </source>
</evidence>
<evidence type="ECO:0000255" key="2">
    <source>
        <dbReference type="PROSITE-ProRule" id="PRU01066"/>
    </source>
</evidence>
<evidence type="ECO:0000256" key="3">
    <source>
        <dbReference type="SAM" id="MobiDB-lite"/>
    </source>
</evidence>
<organism>
    <name type="scientific">Alkalilimnicola ehrlichii (strain ATCC BAA-1101 / DSM 17681 / MLHE-1)</name>
    <dbReference type="NCBI Taxonomy" id="187272"/>
    <lineage>
        <taxon>Bacteria</taxon>
        <taxon>Pseudomonadati</taxon>
        <taxon>Pseudomonadota</taxon>
        <taxon>Gammaproteobacteria</taxon>
        <taxon>Chromatiales</taxon>
        <taxon>Ectothiorhodospiraceae</taxon>
        <taxon>Alkalilimnicola</taxon>
    </lineage>
</organism>
<proteinExistence type="inferred from homology"/>
<feature type="chain" id="PRO_0000302343" description="Glycine cleavage system H protein">
    <location>
        <begin position="1"/>
        <end position="130"/>
    </location>
</feature>
<feature type="domain" description="Lipoyl-binding" evidence="2">
    <location>
        <begin position="24"/>
        <end position="106"/>
    </location>
</feature>
<feature type="region of interest" description="Disordered" evidence="3">
    <location>
        <begin position="111"/>
        <end position="130"/>
    </location>
</feature>
<feature type="modified residue" description="N6-lipoyllysine" evidence="1">
    <location>
        <position position="65"/>
    </location>
</feature>
<name>GCSH_ALKEH</name>
<accession>Q0A5H0</accession>
<reference key="1">
    <citation type="submission" date="2006-08" db="EMBL/GenBank/DDBJ databases">
        <title>Complete sequence of Alkalilimnicola ehrilichei MLHE-1.</title>
        <authorList>
            <person name="Copeland A."/>
            <person name="Lucas S."/>
            <person name="Lapidus A."/>
            <person name="Barry K."/>
            <person name="Detter J.C."/>
            <person name="Glavina del Rio T."/>
            <person name="Hammon N."/>
            <person name="Israni S."/>
            <person name="Dalin E."/>
            <person name="Tice H."/>
            <person name="Pitluck S."/>
            <person name="Sims D."/>
            <person name="Brettin T."/>
            <person name="Bruce D."/>
            <person name="Han C."/>
            <person name="Tapia R."/>
            <person name="Gilna P."/>
            <person name="Schmutz J."/>
            <person name="Larimer F."/>
            <person name="Land M."/>
            <person name="Hauser L."/>
            <person name="Kyrpides N."/>
            <person name="Mikhailova N."/>
            <person name="Oremland R.S."/>
            <person name="Hoeft S.E."/>
            <person name="Switzer-Blum J."/>
            <person name="Kulp T."/>
            <person name="King G."/>
            <person name="Tabita R."/>
            <person name="Witte B."/>
            <person name="Santini J.M."/>
            <person name="Basu P."/>
            <person name="Hollibaugh J.T."/>
            <person name="Xie G."/>
            <person name="Stolz J.F."/>
            <person name="Richardson P."/>
        </authorList>
    </citation>
    <scope>NUCLEOTIDE SEQUENCE [LARGE SCALE GENOMIC DNA]</scope>
    <source>
        <strain>ATCC BAA-1101 / DSM 17681 / MLHE-1</strain>
    </source>
</reference>
<dbReference type="EMBL" id="CP000453">
    <property type="protein sequence ID" value="ABI57917.1"/>
    <property type="molecule type" value="Genomic_DNA"/>
</dbReference>
<dbReference type="RefSeq" id="WP_011630310.1">
    <property type="nucleotide sequence ID" value="NC_008340.1"/>
</dbReference>
<dbReference type="SMR" id="Q0A5H0"/>
<dbReference type="KEGG" id="aeh:Mlg_2577"/>
<dbReference type="eggNOG" id="COG0509">
    <property type="taxonomic scope" value="Bacteria"/>
</dbReference>
<dbReference type="HOGENOM" id="CLU_097408_2_1_6"/>
<dbReference type="OrthoDB" id="9796712at2"/>
<dbReference type="Proteomes" id="UP000001962">
    <property type="component" value="Chromosome"/>
</dbReference>
<dbReference type="GO" id="GO:0005829">
    <property type="term" value="C:cytosol"/>
    <property type="evidence" value="ECO:0007669"/>
    <property type="project" value="TreeGrafter"/>
</dbReference>
<dbReference type="GO" id="GO:0005960">
    <property type="term" value="C:glycine cleavage complex"/>
    <property type="evidence" value="ECO:0007669"/>
    <property type="project" value="InterPro"/>
</dbReference>
<dbReference type="GO" id="GO:0019464">
    <property type="term" value="P:glycine decarboxylation via glycine cleavage system"/>
    <property type="evidence" value="ECO:0007669"/>
    <property type="project" value="UniProtKB-UniRule"/>
</dbReference>
<dbReference type="CDD" id="cd06848">
    <property type="entry name" value="GCS_H"/>
    <property type="match status" value="1"/>
</dbReference>
<dbReference type="Gene3D" id="2.40.50.100">
    <property type="match status" value="1"/>
</dbReference>
<dbReference type="HAMAP" id="MF_00272">
    <property type="entry name" value="GcvH"/>
    <property type="match status" value="1"/>
</dbReference>
<dbReference type="InterPro" id="IPR000089">
    <property type="entry name" value="Biotin_lipoyl"/>
</dbReference>
<dbReference type="InterPro" id="IPR002930">
    <property type="entry name" value="GCV_H"/>
</dbReference>
<dbReference type="InterPro" id="IPR033753">
    <property type="entry name" value="GCV_H/Fam206"/>
</dbReference>
<dbReference type="InterPro" id="IPR017453">
    <property type="entry name" value="GCV_H_sub"/>
</dbReference>
<dbReference type="InterPro" id="IPR011053">
    <property type="entry name" value="Single_hybrid_motif"/>
</dbReference>
<dbReference type="NCBIfam" id="TIGR00527">
    <property type="entry name" value="gcvH"/>
    <property type="match status" value="1"/>
</dbReference>
<dbReference type="NCBIfam" id="NF002270">
    <property type="entry name" value="PRK01202.1"/>
    <property type="match status" value="1"/>
</dbReference>
<dbReference type="PANTHER" id="PTHR11715">
    <property type="entry name" value="GLYCINE CLEAVAGE SYSTEM H PROTEIN"/>
    <property type="match status" value="1"/>
</dbReference>
<dbReference type="PANTHER" id="PTHR11715:SF3">
    <property type="entry name" value="GLYCINE CLEAVAGE SYSTEM H PROTEIN-RELATED"/>
    <property type="match status" value="1"/>
</dbReference>
<dbReference type="Pfam" id="PF01597">
    <property type="entry name" value="GCV_H"/>
    <property type="match status" value="1"/>
</dbReference>
<dbReference type="SUPFAM" id="SSF51230">
    <property type="entry name" value="Single hybrid motif"/>
    <property type="match status" value="1"/>
</dbReference>
<dbReference type="PROSITE" id="PS50968">
    <property type="entry name" value="BIOTINYL_LIPOYL"/>
    <property type="match status" value="1"/>
</dbReference>
<gene>
    <name evidence="1" type="primary">gcvH</name>
    <name type="ordered locus">Mlg_2577</name>
</gene>
<comment type="function">
    <text evidence="1">The glycine cleavage system catalyzes the degradation of glycine. The H protein shuttles the methylamine group of glycine from the P protein to the T protein.</text>
</comment>
<comment type="cofactor">
    <cofactor evidence="1">
        <name>(R)-lipoate</name>
        <dbReference type="ChEBI" id="CHEBI:83088"/>
    </cofactor>
    <text evidence="1">Binds 1 lipoyl cofactor covalently.</text>
</comment>
<comment type="subunit">
    <text evidence="1">The glycine cleavage system is composed of four proteins: P, T, L and H.</text>
</comment>
<comment type="similarity">
    <text evidence="1">Belongs to the GcvH family.</text>
</comment>
<keyword id="KW-0450">Lipoyl</keyword>
<keyword id="KW-1185">Reference proteome</keyword>
<sequence>MTQVPDNLKYNRTHEWTRLEDDGTLTIGITDHAQSELGDLVFVETPTVGRHYDAEEACAVVESVKAASDIYAPVGGEVIEANSELQDSPELVNTDPYGEGWIMRIRPDDSDDLEQLLDPEDYQDLVADEE</sequence>